<protein>
    <recommendedName>
        <fullName>Uncharacterized protein L178</fullName>
    </recommendedName>
</protein>
<comment type="similarity">
    <text evidence="1">Belongs to the mimivirus L17x/L18x family.</text>
</comment>
<sequence>MGDFVFCYGLHNKNRLSKYIKQTKKGYKLYLDDDNHIKIKIETRSGQKYIVIDFNDSLDFLKFIVKKKIYCDEYKHDCNSLCLHNDYLEYVIENKHYDIVKFYCKKFVPLIKSNISVYPFSFSLFVDIDLDDFKYMFKYSCLEDINPYFIYVLGQSDNITIEFMDDIIGMYKSKLTRLFTNNKISDSNIDNIKIGLQDFIKPVYKKDDVNLFDFIIEEIHNLTSEIDKTKLYKKQLGFLKIFEFYYELDTKTINRFINYVLDCTCQKIFERLLFNLGNIDLLDKTIVRDILEFNMVEYMGIICDFIGDTNPELINKMLTKATSTEMAQLLIDCGADYEKLYKSQNFRKCNDCVKNFIKKLVKETSDS</sequence>
<gene>
    <name type="ordered locus">MIMI_L178</name>
</gene>
<proteinExistence type="inferred from homology"/>
<dbReference type="EMBL" id="AY653733">
    <property type="protein sequence ID" value="AAV50452.1"/>
    <property type="molecule type" value="Genomic_DNA"/>
</dbReference>
<dbReference type="SMR" id="Q5UPN7"/>
<dbReference type="KEGG" id="vg:9924780"/>
<dbReference type="Proteomes" id="UP000001134">
    <property type="component" value="Genome"/>
</dbReference>
<organismHost>
    <name type="scientific">Acanthamoeba polyphaga</name>
    <name type="common">Amoeba</name>
    <dbReference type="NCBI Taxonomy" id="5757"/>
</organismHost>
<evidence type="ECO:0000305" key="1"/>
<accession>Q5UPN7</accession>
<keyword id="KW-1185">Reference proteome</keyword>
<reference key="1">
    <citation type="journal article" date="2004" name="Science">
        <title>The 1.2-megabase genome sequence of Mimivirus.</title>
        <authorList>
            <person name="Raoult D."/>
            <person name="Audic S."/>
            <person name="Robert C."/>
            <person name="Abergel C."/>
            <person name="Renesto P."/>
            <person name="Ogata H."/>
            <person name="La Scola B."/>
            <person name="Susan M."/>
            <person name="Claverie J.-M."/>
        </authorList>
    </citation>
    <scope>NUCLEOTIDE SEQUENCE [LARGE SCALE GENOMIC DNA]</scope>
    <source>
        <strain>Rowbotham-Bradford</strain>
    </source>
</reference>
<feature type="chain" id="PRO_0000071234" description="Uncharacterized protein L178">
    <location>
        <begin position="1"/>
        <end position="367"/>
    </location>
</feature>
<organism>
    <name type="scientific">Acanthamoeba polyphaga mimivirus</name>
    <name type="common">APMV</name>
    <dbReference type="NCBI Taxonomy" id="212035"/>
    <lineage>
        <taxon>Viruses</taxon>
        <taxon>Varidnaviria</taxon>
        <taxon>Bamfordvirae</taxon>
        <taxon>Nucleocytoviricota</taxon>
        <taxon>Megaviricetes</taxon>
        <taxon>Imitervirales</taxon>
        <taxon>Mimiviridae</taxon>
        <taxon>Megamimivirinae</taxon>
        <taxon>Mimivirus</taxon>
        <taxon>Mimivirus bradfordmassiliense</taxon>
    </lineage>
</organism>
<name>YL178_MIMIV</name>